<proteinExistence type="evidence at transcript level"/>
<reference key="1">
    <citation type="journal article" date="2013" name="Nature">
        <title>The zebrafish reference genome sequence and its relationship to the human genome.</title>
        <authorList>
            <person name="Howe K."/>
            <person name="Clark M.D."/>
            <person name="Torroja C.F."/>
            <person name="Torrance J."/>
            <person name="Berthelot C."/>
            <person name="Muffato M."/>
            <person name="Collins J.E."/>
            <person name="Humphray S."/>
            <person name="McLaren K."/>
            <person name="Matthews L."/>
            <person name="McLaren S."/>
            <person name="Sealy I."/>
            <person name="Caccamo M."/>
            <person name="Churcher C."/>
            <person name="Scott C."/>
            <person name="Barrett J.C."/>
            <person name="Koch R."/>
            <person name="Rauch G.J."/>
            <person name="White S."/>
            <person name="Chow W."/>
            <person name="Kilian B."/>
            <person name="Quintais L.T."/>
            <person name="Guerra-Assuncao J.A."/>
            <person name="Zhou Y."/>
            <person name="Gu Y."/>
            <person name="Yen J."/>
            <person name="Vogel J.H."/>
            <person name="Eyre T."/>
            <person name="Redmond S."/>
            <person name="Banerjee R."/>
            <person name="Chi J."/>
            <person name="Fu B."/>
            <person name="Langley E."/>
            <person name="Maguire S.F."/>
            <person name="Laird G.K."/>
            <person name="Lloyd D."/>
            <person name="Kenyon E."/>
            <person name="Donaldson S."/>
            <person name="Sehra H."/>
            <person name="Almeida-King J."/>
            <person name="Loveland J."/>
            <person name="Trevanion S."/>
            <person name="Jones M."/>
            <person name="Quail M."/>
            <person name="Willey D."/>
            <person name="Hunt A."/>
            <person name="Burton J."/>
            <person name="Sims S."/>
            <person name="McLay K."/>
            <person name="Plumb B."/>
            <person name="Davis J."/>
            <person name="Clee C."/>
            <person name="Oliver K."/>
            <person name="Clark R."/>
            <person name="Riddle C."/>
            <person name="Elliot D."/>
            <person name="Threadgold G."/>
            <person name="Harden G."/>
            <person name="Ware D."/>
            <person name="Begum S."/>
            <person name="Mortimore B."/>
            <person name="Kerry G."/>
            <person name="Heath P."/>
            <person name="Phillimore B."/>
            <person name="Tracey A."/>
            <person name="Corby N."/>
            <person name="Dunn M."/>
            <person name="Johnson C."/>
            <person name="Wood J."/>
            <person name="Clark S."/>
            <person name="Pelan S."/>
            <person name="Griffiths G."/>
            <person name="Smith M."/>
            <person name="Glithero R."/>
            <person name="Howden P."/>
            <person name="Barker N."/>
            <person name="Lloyd C."/>
            <person name="Stevens C."/>
            <person name="Harley J."/>
            <person name="Holt K."/>
            <person name="Panagiotidis G."/>
            <person name="Lovell J."/>
            <person name="Beasley H."/>
            <person name="Henderson C."/>
            <person name="Gordon D."/>
            <person name="Auger K."/>
            <person name="Wright D."/>
            <person name="Collins J."/>
            <person name="Raisen C."/>
            <person name="Dyer L."/>
            <person name="Leung K."/>
            <person name="Robertson L."/>
            <person name="Ambridge K."/>
            <person name="Leongamornlert D."/>
            <person name="McGuire S."/>
            <person name="Gilderthorp R."/>
            <person name="Griffiths C."/>
            <person name="Manthravadi D."/>
            <person name="Nichol S."/>
            <person name="Barker G."/>
            <person name="Whitehead S."/>
            <person name="Kay M."/>
            <person name="Brown J."/>
            <person name="Murnane C."/>
            <person name="Gray E."/>
            <person name="Humphries M."/>
            <person name="Sycamore N."/>
            <person name="Barker D."/>
            <person name="Saunders D."/>
            <person name="Wallis J."/>
            <person name="Babbage A."/>
            <person name="Hammond S."/>
            <person name="Mashreghi-Mohammadi M."/>
            <person name="Barr L."/>
            <person name="Martin S."/>
            <person name="Wray P."/>
            <person name="Ellington A."/>
            <person name="Matthews N."/>
            <person name="Ellwood M."/>
            <person name="Woodmansey R."/>
            <person name="Clark G."/>
            <person name="Cooper J."/>
            <person name="Tromans A."/>
            <person name="Grafham D."/>
            <person name="Skuce C."/>
            <person name="Pandian R."/>
            <person name="Andrews R."/>
            <person name="Harrison E."/>
            <person name="Kimberley A."/>
            <person name="Garnett J."/>
            <person name="Fosker N."/>
            <person name="Hall R."/>
            <person name="Garner P."/>
            <person name="Kelly D."/>
            <person name="Bird C."/>
            <person name="Palmer S."/>
            <person name="Gehring I."/>
            <person name="Berger A."/>
            <person name="Dooley C.M."/>
            <person name="Ersan-Urun Z."/>
            <person name="Eser C."/>
            <person name="Geiger H."/>
            <person name="Geisler M."/>
            <person name="Karotki L."/>
            <person name="Kirn A."/>
            <person name="Konantz J."/>
            <person name="Konantz M."/>
            <person name="Oberlander M."/>
            <person name="Rudolph-Geiger S."/>
            <person name="Teucke M."/>
            <person name="Lanz C."/>
            <person name="Raddatz G."/>
            <person name="Osoegawa K."/>
            <person name="Zhu B."/>
            <person name="Rapp A."/>
            <person name="Widaa S."/>
            <person name="Langford C."/>
            <person name="Yang F."/>
            <person name="Schuster S.C."/>
            <person name="Carter N.P."/>
            <person name="Harrow J."/>
            <person name="Ning Z."/>
            <person name="Herrero J."/>
            <person name="Searle S.M."/>
            <person name="Enright A."/>
            <person name="Geisler R."/>
            <person name="Plasterk R.H."/>
            <person name="Lee C."/>
            <person name="Westerfield M."/>
            <person name="de Jong P.J."/>
            <person name="Zon L.I."/>
            <person name="Postlethwait J.H."/>
            <person name="Nusslein-Volhard C."/>
            <person name="Hubbard T.J."/>
            <person name="Roest Crollius H."/>
            <person name="Rogers J."/>
            <person name="Stemple D.L."/>
        </authorList>
    </citation>
    <scope>NUCLEOTIDE SEQUENCE [LARGE SCALE GENOMIC DNA]</scope>
    <source>
        <strain>Tuebingen</strain>
    </source>
</reference>
<reference key="2">
    <citation type="journal article" date="2022" name="Cells">
        <title>Functional study of TMEM163 gene variants associated with hypomyelination leukodystrophy.</title>
        <authorList>
            <person name="Yan H."/>
            <person name="Yang S."/>
            <person name="Hou Y."/>
            <person name="Ali S."/>
            <person name="Escobar A."/>
            <person name="Gao K."/>
            <person name="Duan R."/>
            <person name="Kubisiak T."/>
            <person name="Wang J."/>
            <person name="Zhang Y."/>
            <person name="Xiao J."/>
            <person name="Jiang Y."/>
            <person name="Zhang T."/>
            <person name="Wu Y."/>
            <person name="Burmeister M."/>
            <person name="Wang Q."/>
            <person name="Cuajungco M.P."/>
            <person name="Wang J."/>
        </authorList>
    </citation>
    <scope>FUNCTION</scope>
    <scope>DISRUPTION PHENOTYPE</scope>
    <scope>DEVELOPMENTAL STAGE</scope>
</reference>
<protein>
    <recommendedName>
        <fullName evidence="8">Transmembrane protein 163b</fullName>
    </recommendedName>
</protein>
<comment type="function">
    <text evidence="1 3 6">Zinc ion transporter that mediates zinc efflux and plays a crucial role in intracellular zinc homeostasis (By similarity). Binds the divalent cations Zn(2+), Ni(2+), and to a minor extent Cu(2+) (By similarity). Is a functional modulator of P2X purinoceptors, including P2RX1, P2RX3, P2RX4 and P2RX7 (By similarity). Plays a role in central nervous system development and is required for myelination, and survival and proliferation of oligodendrocytes (PubMed:35455965).</text>
</comment>
<comment type="catalytic activity">
    <reaction evidence="3">
        <text>Zn(2+)(in) = Zn(2+)(out)</text>
        <dbReference type="Rhea" id="RHEA:29351"/>
        <dbReference type="ChEBI" id="CHEBI:29105"/>
    </reaction>
    <physiologicalReaction direction="left-to-right" evidence="3">
        <dbReference type="Rhea" id="RHEA:29352"/>
    </physiologicalReaction>
</comment>
<comment type="subcellular location">
    <subcellularLocation>
        <location evidence="2">Cytoplasmic vesicle</location>
        <location evidence="2">Secretory vesicle</location>
        <location evidence="2">Synaptic vesicle membrane</location>
        <topology evidence="4">Multi-pass membrane protein</topology>
    </subcellularLocation>
    <subcellularLocation>
        <location evidence="1">Early endosome membrane</location>
        <topology evidence="4">Multi-pass membrane protein</topology>
    </subcellularLocation>
    <subcellularLocation>
        <location evidence="3">Late endosome membrane</location>
        <topology evidence="4">Multi-pass membrane protein</topology>
    </subcellularLocation>
    <subcellularLocation>
        <location evidence="3">Lysosome membrane</location>
        <topology evidence="4">Multi-pass membrane protein</topology>
    </subcellularLocation>
    <subcellularLocation>
        <location evidence="3">Cell membrane</location>
        <topology evidence="4">Multi-pass membrane protein</topology>
    </subcellularLocation>
    <text evidence="1">Glutamatergic synaptic vesicles.</text>
</comment>
<comment type="developmental stage">
    <text evidence="6">At 24 hours post-fertilization (hpf), it is mainly expressed in the central nervous system and the tail bud. It is detected in the brain and motor neurons of the spinal cord at 48 hpf.</text>
</comment>
<comment type="disruption phenotype">
    <text evidence="6">Morpholino tmem163b knockdown severely affects central nervous system development. Morphant larvae display locomotor disability, decreased survival, and myelin deficits associated with a reduced number of oligodendrocytes.</text>
</comment>
<comment type="similarity">
    <text evidence="7">Belongs to the TMEM163 family.</text>
</comment>
<accession>F2Z4R5</accession>
<accession>A0A8M2BLF0</accession>
<gene>
    <name evidence="8" type="primary">tmem163b</name>
</gene>
<feature type="chain" id="PRO_0000458278" description="Transmembrane protein 163b">
    <location>
        <begin position="1"/>
        <end position="284"/>
    </location>
</feature>
<feature type="topological domain" description="Cytoplasmic" evidence="7">
    <location>
        <begin position="1"/>
        <end position="83"/>
    </location>
</feature>
<feature type="transmembrane region" description="Helical" evidence="4">
    <location>
        <begin position="84"/>
        <end position="104"/>
    </location>
</feature>
<feature type="topological domain" description="Extracellular" evidence="7">
    <location>
        <begin position="105"/>
        <end position="111"/>
    </location>
</feature>
<feature type="transmembrane region" description="Helical" evidence="4">
    <location>
        <begin position="112"/>
        <end position="132"/>
    </location>
</feature>
<feature type="topological domain" description="Cytoplasmic" evidence="7">
    <location>
        <begin position="133"/>
        <end position="145"/>
    </location>
</feature>
<feature type="transmembrane region" description="Helical" evidence="4">
    <location>
        <begin position="146"/>
        <end position="166"/>
    </location>
</feature>
<feature type="topological domain" description="Extracellular" evidence="7">
    <location>
        <begin position="167"/>
        <end position="182"/>
    </location>
</feature>
<feature type="transmembrane region" description="Helical" evidence="4">
    <location>
        <begin position="183"/>
        <end position="203"/>
    </location>
</feature>
<feature type="topological domain" description="Cytoplasmic" evidence="7">
    <location>
        <begin position="204"/>
        <end position="212"/>
    </location>
</feature>
<feature type="transmembrane region" description="Helical" evidence="4">
    <location>
        <begin position="213"/>
        <end position="233"/>
    </location>
</feature>
<feature type="topological domain" description="Extracellular" evidence="7">
    <location>
        <begin position="234"/>
        <end position="243"/>
    </location>
</feature>
<feature type="transmembrane region" description="Helical" evidence="4">
    <location>
        <begin position="244"/>
        <end position="264"/>
    </location>
</feature>
<feature type="topological domain" description="Cytoplasmic" evidence="7">
    <location>
        <begin position="265"/>
        <end position="284"/>
    </location>
</feature>
<feature type="region of interest" description="Disordered" evidence="5">
    <location>
        <begin position="1"/>
        <end position="44"/>
    </location>
</feature>
<evidence type="ECO:0000250" key="1">
    <source>
        <dbReference type="UniProtKB" id="A9CMA6"/>
    </source>
</evidence>
<evidence type="ECO:0000250" key="2">
    <source>
        <dbReference type="UniProtKB" id="Q8C996"/>
    </source>
</evidence>
<evidence type="ECO:0000250" key="3">
    <source>
        <dbReference type="UniProtKB" id="Q8TC26"/>
    </source>
</evidence>
<evidence type="ECO:0000255" key="4"/>
<evidence type="ECO:0000256" key="5">
    <source>
        <dbReference type="SAM" id="MobiDB-lite"/>
    </source>
</evidence>
<evidence type="ECO:0000269" key="6">
    <source>
    </source>
</evidence>
<evidence type="ECO:0000305" key="7"/>
<evidence type="ECO:0000312" key="8">
    <source>
        <dbReference type="ZFIN" id="ZDB-GENE-091204-410"/>
    </source>
</evidence>
<keyword id="KW-1003">Cell membrane</keyword>
<keyword id="KW-0968">Cytoplasmic vesicle</keyword>
<keyword id="KW-0967">Endosome</keyword>
<keyword id="KW-0458">Lysosome</keyword>
<keyword id="KW-0472">Membrane</keyword>
<keyword id="KW-1185">Reference proteome</keyword>
<keyword id="KW-0770">Synapse</keyword>
<keyword id="KW-0812">Transmembrane</keyword>
<keyword id="KW-1133">Transmembrane helix</keyword>
<keyword id="KW-0813">Transport</keyword>
<keyword id="KW-0862">Zinc</keyword>
<name>T163B_DANRE</name>
<sequence length="284" mass="30760">MTDSSSASDPTAGPVDPGPAPSAPDPALEDPASTPANGHHPNQADSFNMEQQMKIGEPEDNAGLLESSMRLKPHEAQSYRKKALWVSWVSIVVTMILAIAAFTVSIMRHSASAFGFAFDATLDVLSSIIVLWRYSNAAAVHSAHREYIACVILGVVFILSAITILVKAIHDLATKLEPEVDDFLYSVSVISGVVCTVLCVCKFMLGKVLTSRALITDGFNSLVGGVMGFSILISAEVFKHEPSVWFLDGTIGILIGLIILAYGVKLLKDMVPRIRQTRHYERFE</sequence>
<organism>
    <name type="scientific">Danio rerio</name>
    <name type="common">Zebrafish</name>
    <name type="synonym">Brachydanio rerio</name>
    <dbReference type="NCBI Taxonomy" id="7955"/>
    <lineage>
        <taxon>Eukaryota</taxon>
        <taxon>Metazoa</taxon>
        <taxon>Chordata</taxon>
        <taxon>Craniata</taxon>
        <taxon>Vertebrata</taxon>
        <taxon>Euteleostomi</taxon>
        <taxon>Actinopterygii</taxon>
        <taxon>Neopterygii</taxon>
        <taxon>Teleostei</taxon>
        <taxon>Ostariophysi</taxon>
        <taxon>Cypriniformes</taxon>
        <taxon>Danionidae</taxon>
        <taxon>Danioninae</taxon>
        <taxon>Danio</taxon>
    </lineage>
</organism>
<dbReference type="EMBL" id="CU571316">
    <property type="status" value="NOT_ANNOTATED_CDS"/>
    <property type="molecule type" value="Genomic_DNA"/>
</dbReference>
<dbReference type="RefSeq" id="NP_001410777.1">
    <property type="nucleotide sequence ID" value="NM_001423848.1"/>
</dbReference>
<dbReference type="RefSeq" id="XP_005174068.1">
    <property type="nucleotide sequence ID" value="XM_005174011.3"/>
</dbReference>
<dbReference type="SMR" id="F2Z4R5"/>
<dbReference type="FunCoup" id="F2Z4R5">
    <property type="interactions" value="120"/>
</dbReference>
<dbReference type="PaxDb" id="7955-ENSDARP00000122494"/>
<dbReference type="Ensembl" id="ENSDART00000146785">
    <property type="protein sequence ID" value="ENSDARP00000122494"/>
    <property type="gene ID" value="ENSDARG00000088227"/>
</dbReference>
<dbReference type="GeneID" id="100333673"/>
<dbReference type="AGR" id="ZFIN:ZDB-GENE-091204-410"/>
<dbReference type="ZFIN" id="ZDB-GENE-091204-410">
    <property type="gene designation" value="tmem163b"/>
</dbReference>
<dbReference type="eggNOG" id="ENOG502QW7B">
    <property type="taxonomic scope" value="Eukaryota"/>
</dbReference>
<dbReference type="InParanoid" id="F2Z4R5"/>
<dbReference type="OMA" id="QADTFNM"/>
<dbReference type="OrthoDB" id="5980560at2759"/>
<dbReference type="PhylomeDB" id="F2Z4R5"/>
<dbReference type="TreeFam" id="TF330782"/>
<dbReference type="PRO" id="PR:F2Z4R5"/>
<dbReference type="Proteomes" id="UP000000437">
    <property type="component" value="Chromosome 22"/>
</dbReference>
<dbReference type="Bgee" id="ENSDARG00000088227">
    <property type="expression patterns" value="Expressed in brain and 6 other cell types or tissues"/>
</dbReference>
<dbReference type="ExpressionAtlas" id="F2Z4R5">
    <property type="expression patterns" value="baseline"/>
</dbReference>
<dbReference type="GO" id="GO:0031901">
    <property type="term" value="C:early endosome membrane"/>
    <property type="evidence" value="ECO:0007669"/>
    <property type="project" value="UniProtKB-SubCell"/>
</dbReference>
<dbReference type="GO" id="GO:0031902">
    <property type="term" value="C:late endosome membrane"/>
    <property type="evidence" value="ECO:0007669"/>
    <property type="project" value="UniProtKB-SubCell"/>
</dbReference>
<dbReference type="GO" id="GO:0005765">
    <property type="term" value="C:lysosomal membrane"/>
    <property type="evidence" value="ECO:0007669"/>
    <property type="project" value="UniProtKB-SubCell"/>
</dbReference>
<dbReference type="GO" id="GO:0005886">
    <property type="term" value="C:plasma membrane"/>
    <property type="evidence" value="ECO:0007669"/>
    <property type="project" value="UniProtKB-SubCell"/>
</dbReference>
<dbReference type="GO" id="GO:0030672">
    <property type="term" value="C:synaptic vesicle membrane"/>
    <property type="evidence" value="ECO:0000318"/>
    <property type="project" value="GO_Central"/>
</dbReference>
<dbReference type="GO" id="GO:0008324">
    <property type="term" value="F:monoatomic cation transmembrane transporter activity"/>
    <property type="evidence" value="ECO:0007669"/>
    <property type="project" value="InterPro"/>
</dbReference>
<dbReference type="GO" id="GO:0008270">
    <property type="term" value="F:zinc ion binding"/>
    <property type="evidence" value="ECO:0000318"/>
    <property type="project" value="GO_Central"/>
</dbReference>
<dbReference type="GO" id="GO:0042552">
    <property type="term" value="P:myelination"/>
    <property type="evidence" value="ECO:0000316"/>
    <property type="project" value="ZFIN"/>
</dbReference>
<dbReference type="GO" id="GO:0014003">
    <property type="term" value="P:oligodendrocyte development"/>
    <property type="evidence" value="ECO:0000316"/>
    <property type="project" value="ZFIN"/>
</dbReference>
<dbReference type="Gene3D" id="1.20.1510.10">
    <property type="entry name" value="Cation efflux protein transmembrane domain"/>
    <property type="match status" value="1"/>
</dbReference>
<dbReference type="InterPro" id="IPR002524">
    <property type="entry name" value="Cation_efflux"/>
</dbReference>
<dbReference type="InterPro" id="IPR027469">
    <property type="entry name" value="Cation_efflux_TMD_sf"/>
</dbReference>
<dbReference type="InterPro" id="IPR026765">
    <property type="entry name" value="Tmem163"/>
</dbReference>
<dbReference type="PANTHER" id="PTHR31937">
    <property type="entry name" value="TRANSMEMBRANE PROTEIN 163"/>
    <property type="match status" value="1"/>
</dbReference>
<dbReference type="PANTHER" id="PTHR31937:SF2">
    <property type="entry name" value="TRANSMEMBRANE PROTEIN 163"/>
    <property type="match status" value="1"/>
</dbReference>
<dbReference type="Pfam" id="PF01545">
    <property type="entry name" value="Cation_efflux"/>
    <property type="match status" value="1"/>
</dbReference>
<dbReference type="SUPFAM" id="SSF161111">
    <property type="entry name" value="Cation efflux protein transmembrane domain-like"/>
    <property type="match status" value="1"/>
</dbReference>